<proteinExistence type="evidence at transcript level"/>
<feature type="chain" id="PRO_1000145651" description="Multidrug resistance protein MdtB">
    <location>
        <begin position="1"/>
        <end position="1040"/>
    </location>
</feature>
<feature type="transmembrane region" description="Helical" evidence="1">
    <location>
        <begin position="16"/>
        <end position="36"/>
    </location>
</feature>
<feature type="transmembrane region" description="Helical" evidence="1">
    <location>
        <begin position="347"/>
        <end position="367"/>
    </location>
</feature>
<feature type="transmembrane region" description="Helical" evidence="1">
    <location>
        <begin position="369"/>
        <end position="389"/>
    </location>
</feature>
<feature type="transmembrane region" description="Helical" evidence="1">
    <location>
        <begin position="396"/>
        <end position="416"/>
    </location>
</feature>
<feature type="transmembrane region" description="Helical" evidence="1">
    <location>
        <begin position="440"/>
        <end position="460"/>
    </location>
</feature>
<feature type="transmembrane region" description="Helical" evidence="1">
    <location>
        <begin position="472"/>
        <end position="492"/>
    </location>
</feature>
<feature type="transmembrane region" description="Helical" evidence="1">
    <location>
        <begin position="537"/>
        <end position="557"/>
    </location>
</feature>
<feature type="transmembrane region" description="Helical" evidence="1">
    <location>
        <begin position="863"/>
        <end position="883"/>
    </location>
</feature>
<feature type="transmembrane region" description="Helical" evidence="1">
    <location>
        <begin position="888"/>
        <end position="908"/>
    </location>
</feature>
<feature type="transmembrane region" description="Helical" evidence="1">
    <location>
        <begin position="911"/>
        <end position="931"/>
    </location>
</feature>
<feature type="transmembrane region" description="Helical" evidence="1">
    <location>
        <begin position="968"/>
        <end position="988"/>
    </location>
</feature>
<feature type="transmembrane region" description="Helical" evidence="1">
    <location>
        <begin position="998"/>
        <end position="1018"/>
    </location>
</feature>
<comment type="function">
    <text evidence="1">The MdtABC tripartite complex confers resistance against novobiocin and deoxycholate.</text>
</comment>
<comment type="subunit">
    <text evidence="1">Part of a tripartite efflux system composed of MdtA, MdtB and MdtC. MdtB forms a heteromultimer with MdtC.</text>
</comment>
<comment type="subcellular location">
    <subcellularLocation>
        <location evidence="1">Cell inner membrane</location>
        <topology evidence="1">Multi-pass membrane protein</topology>
    </subcellularLocation>
</comment>
<comment type="induction">
    <text>The mdtABC operon is transcriptionally activated by BaeR.</text>
</comment>
<comment type="similarity">
    <text evidence="1">Belongs to the resistance-nodulation-cell division (RND) (TC 2.A.6) family. MdtB subfamily.</text>
</comment>
<dbReference type="EMBL" id="CP000948">
    <property type="protein sequence ID" value="ACB03247.1"/>
    <property type="molecule type" value="Genomic_DNA"/>
</dbReference>
<dbReference type="RefSeq" id="WP_001197875.1">
    <property type="nucleotide sequence ID" value="NC_010473.1"/>
</dbReference>
<dbReference type="SMR" id="B1X7H1"/>
<dbReference type="KEGG" id="ecd:ECDH10B_2227"/>
<dbReference type="HOGENOM" id="CLU_002755_1_2_6"/>
<dbReference type="GO" id="GO:0005886">
    <property type="term" value="C:plasma membrane"/>
    <property type="evidence" value="ECO:0007669"/>
    <property type="project" value="UniProtKB-SubCell"/>
</dbReference>
<dbReference type="GO" id="GO:0042910">
    <property type="term" value="F:xenobiotic transmembrane transporter activity"/>
    <property type="evidence" value="ECO:0007669"/>
    <property type="project" value="TreeGrafter"/>
</dbReference>
<dbReference type="FunFam" id="1.20.1640.10:FF:000001">
    <property type="entry name" value="Efflux pump membrane transporter"/>
    <property type="match status" value="1"/>
</dbReference>
<dbReference type="FunFam" id="3.30.70.1430:FF:000001">
    <property type="entry name" value="Efflux pump membrane transporter"/>
    <property type="match status" value="1"/>
</dbReference>
<dbReference type="FunFam" id="3.30.2090.10:FF:000003">
    <property type="entry name" value="Multidrug resistance protein MdtB"/>
    <property type="match status" value="1"/>
</dbReference>
<dbReference type="FunFam" id="3.30.2090.10:FF:000006">
    <property type="entry name" value="Multidrug resistance protein MdtB"/>
    <property type="match status" value="1"/>
</dbReference>
<dbReference type="Gene3D" id="3.30.70.1430">
    <property type="entry name" value="Multidrug efflux transporter AcrB pore domain"/>
    <property type="match status" value="2"/>
</dbReference>
<dbReference type="Gene3D" id="3.30.70.1440">
    <property type="entry name" value="Multidrug efflux transporter AcrB pore domain"/>
    <property type="match status" value="1"/>
</dbReference>
<dbReference type="Gene3D" id="3.30.70.1320">
    <property type="entry name" value="Multidrug efflux transporter AcrB pore domain like"/>
    <property type="match status" value="1"/>
</dbReference>
<dbReference type="Gene3D" id="3.30.2090.10">
    <property type="entry name" value="Multidrug efflux transporter AcrB TolC docking domain, DN and DC subdomains"/>
    <property type="match status" value="2"/>
</dbReference>
<dbReference type="Gene3D" id="1.20.1640.10">
    <property type="entry name" value="Multidrug efflux transporter AcrB transmembrane domain"/>
    <property type="match status" value="2"/>
</dbReference>
<dbReference type="HAMAP" id="MF_01423">
    <property type="entry name" value="MdtB"/>
    <property type="match status" value="1"/>
</dbReference>
<dbReference type="InterPro" id="IPR027463">
    <property type="entry name" value="AcrB_DN_DC_subdom"/>
</dbReference>
<dbReference type="InterPro" id="IPR001036">
    <property type="entry name" value="Acrflvin-R"/>
</dbReference>
<dbReference type="InterPro" id="IPR022831">
    <property type="entry name" value="Multidrug-R_MdtB"/>
</dbReference>
<dbReference type="NCBIfam" id="NF007798">
    <property type="entry name" value="PRK10503.1"/>
    <property type="match status" value="1"/>
</dbReference>
<dbReference type="NCBIfam" id="NF033617">
    <property type="entry name" value="RND_permease_2"/>
    <property type="match status" value="1"/>
</dbReference>
<dbReference type="PANTHER" id="PTHR32063">
    <property type="match status" value="1"/>
</dbReference>
<dbReference type="PANTHER" id="PTHR32063:SF21">
    <property type="entry name" value="MULTIDRUG RESISTANCE PROTEIN MDTB"/>
    <property type="match status" value="1"/>
</dbReference>
<dbReference type="Pfam" id="PF00873">
    <property type="entry name" value="ACR_tran"/>
    <property type="match status" value="1"/>
</dbReference>
<dbReference type="PRINTS" id="PR00702">
    <property type="entry name" value="ACRIFLAVINRP"/>
</dbReference>
<dbReference type="SUPFAM" id="SSF82693">
    <property type="entry name" value="Multidrug efflux transporter AcrB pore domain, PN1, PN2, PC1 and PC2 subdomains"/>
    <property type="match status" value="3"/>
</dbReference>
<dbReference type="SUPFAM" id="SSF82714">
    <property type="entry name" value="Multidrug efflux transporter AcrB TolC docking domain, DN and DC subdomains"/>
    <property type="match status" value="2"/>
</dbReference>
<dbReference type="SUPFAM" id="SSF82866">
    <property type="entry name" value="Multidrug efflux transporter AcrB transmembrane domain"/>
    <property type="match status" value="2"/>
</dbReference>
<reference key="1">
    <citation type="journal article" date="2008" name="J. Bacteriol.">
        <title>The complete genome sequence of Escherichia coli DH10B: insights into the biology of a laboratory workhorse.</title>
        <authorList>
            <person name="Durfee T."/>
            <person name="Nelson R."/>
            <person name="Baldwin S."/>
            <person name="Plunkett G. III"/>
            <person name="Burland V."/>
            <person name="Mau B."/>
            <person name="Petrosino J.F."/>
            <person name="Qin X."/>
            <person name="Muzny D.M."/>
            <person name="Ayele M."/>
            <person name="Gibbs R.A."/>
            <person name="Csorgo B."/>
            <person name="Posfai G."/>
            <person name="Weinstock G.M."/>
            <person name="Blattner F.R."/>
        </authorList>
    </citation>
    <scope>NUCLEOTIDE SEQUENCE [LARGE SCALE GENOMIC DNA]</scope>
    <source>
        <strain>K12 / DH10B</strain>
    </source>
</reference>
<sequence length="1040" mass="112078">MQVLPPSSTGGPSRLFIMRPVATTLLMVAILLAGIIGYRALPVSALPEVDYPTIQVVTLYPGASPDVMTSAVTAPLERQFGQMSGLKQMSSQSSGGASVITLQFQLTLPLDVAEQEVQAAINAATNLLPSDLPNPPVYSKVNPADPPIMTLAVTSTAMPMTQVEDMVETRVAQKISQISGVGLVTLSGGQRPAVRVKLNAQAIAALGLTSETVRTAITGANVNSAKGSLDGPSRAVTLSANDQMQSAEEYRQLIIAYQNGAPIRLGDVATVEQGAENSWLGAWANKEQAIVMNVQRQPGANIISTADSIRQMLPQLTESLPKSVKVTVLSDRTTNIRASVDDTQFELMMAIALVVMIIYLFLRNIPATIIPGVAVPLSLIGTFAVMVFLDFSINNLTLMALTIATGFVVDDAIVVIENISRYIEKGEKPLAAALKGAGEIGFTIISLTFSLIAVLIPLLFMGDIVGRLFREFAITLAVAILISAVVSLTLTPMMCARMLSQESLRKQNRFSRASEKMFDRIIAAYGRGLAKVLNHPWLTLSVALSTLLLSVLLWVFIPKGFFPVQDNGIIQGTLQAPQSSSFANMAQRQRQVADVILQDPAVQSLTSFVGVDGTNPSLNSARLQINLKPLDERDDRVQKVIARLQTAVDKVPGVDLFLQPTQDLTIDTQVSRTQYQFTLQATSLDALSTWVPQLMEKLQQLPQLSDVSSDWQDKGLVAYVNVDRDSASRLGISMADVDNALYNAFGQRLISTIYTQANQYRVVLEHNTENTPGLAALDTIRLTSSDGGVVPLSSIAKIEQRFAPLSINHLDQFPVTTISFNVPDNYSLGDAVQAIMDTEKTLNLPVDITTQFQGSTLAFQSALGSTVWLIVAAVVAMYIVLGILYESFIHPITILSTLPTAGVGALLALLIAGSELDVIAIIGIILLIGIVKKNAIMMIDFALAAEREQGMSPREAIYQACLLRFRPILMTTLAALLGALPLMLSTGVGAELRRPLGIGMVGGLIVSQVLTLFTTPVIYLLFDRLALWTKSRFARHEEEA</sequence>
<evidence type="ECO:0000255" key="1">
    <source>
        <dbReference type="HAMAP-Rule" id="MF_01423"/>
    </source>
</evidence>
<organism>
    <name type="scientific">Escherichia coli (strain K12 / DH10B)</name>
    <dbReference type="NCBI Taxonomy" id="316385"/>
    <lineage>
        <taxon>Bacteria</taxon>
        <taxon>Pseudomonadati</taxon>
        <taxon>Pseudomonadota</taxon>
        <taxon>Gammaproteobacteria</taxon>
        <taxon>Enterobacterales</taxon>
        <taxon>Enterobacteriaceae</taxon>
        <taxon>Escherichia</taxon>
    </lineage>
</organism>
<gene>
    <name evidence="1" type="primary">mdtB</name>
    <name type="ordered locus">ECDH10B_2227</name>
</gene>
<protein>
    <recommendedName>
        <fullName evidence="1">Multidrug resistance protein MdtB</fullName>
    </recommendedName>
    <alternativeName>
        <fullName evidence="1">Multidrug transporter MdtB</fullName>
    </alternativeName>
</protein>
<keyword id="KW-0997">Cell inner membrane</keyword>
<keyword id="KW-1003">Cell membrane</keyword>
<keyword id="KW-0472">Membrane</keyword>
<keyword id="KW-0812">Transmembrane</keyword>
<keyword id="KW-1133">Transmembrane helix</keyword>
<keyword id="KW-0813">Transport</keyword>
<accession>B1X7H1</accession>
<name>MDTB_ECODH</name>